<feature type="chain" id="PRO_0000281522" description="Zinc import ATP-binding protein ZnuC">
    <location>
        <begin position="1"/>
        <end position="257"/>
    </location>
</feature>
<feature type="domain" description="ABC transporter" evidence="1">
    <location>
        <begin position="5"/>
        <end position="220"/>
    </location>
</feature>
<feature type="region of interest" description="Disordered" evidence="2">
    <location>
        <begin position="234"/>
        <end position="257"/>
    </location>
</feature>
<feature type="binding site" evidence="1">
    <location>
        <begin position="37"/>
        <end position="44"/>
    </location>
    <ligand>
        <name>ATP</name>
        <dbReference type="ChEBI" id="CHEBI:30616"/>
    </ligand>
</feature>
<name>ZNUC_PHOPR</name>
<evidence type="ECO:0000255" key="1">
    <source>
        <dbReference type="HAMAP-Rule" id="MF_01725"/>
    </source>
</evidence>
<evidence type="ECO:0000256" key="2">
    <source>
        <dbReference type="SAM" id="MobiDB-lite"/>
    </source>
</evidence>
<comment type="function">
    <text evidence="1">Part of the ABC transporter complex ZnuABC involved in zinc import. Responsible for energy coupling to the transport system.</text>
</comment>
<comment type="catalytic activity">
    <reaction evidence="1">
        <text>Zn(2+)(out) + ATP(in) + H2O(in) = Zn(2+)(in) + ADP(in) + phosphate(in) + H(+)(in)</text>
        <dbReference type="Rhea" id="RHEA:29795"/>
        <dbReference type="ChEBI" id="CHEBI:15377"/>
        <dbReference type="ChEBI" id="CHEBI:15378"/>
        <dbReference type="ChEBI" id="CHEBI:29105"/>
        <dbReference type="ChEBI" id="CHEBI:30616"/>
        <dbReference type="ChEBI" id="CHEBI:43474"/>
        <dbReference type="ChEBI" id="CHEBI:456216"/>
        <dbReference type="EC" id="7.2.2.20"/>
    </reaction>
</comment>
<comment type="subunit">
    <text evidence="1">The complex is composed of two ATP-binding proteins (ZnuC), two transmembrane proteins (ZnuB) and a solute-binding protein (ZnuA).</text>
</comment>
<comment type="subcellular location">
    <subcellularLocation>
        <location evidence="1">Cell inner membrane</location>
        <topology evidence="1">Peripheral membrane protein</topology>
    </subcellularLocation>
</comment>
<comment type="similarity">
    <text evidence="1">Belongs to the ABC transporter superfamily. Zinc importer (TC 3.A.1.15.5) family.</text>
</comment>
<keyword id="KW-0067">ATP-binding</keyword>
<keyword id="KW-0997">Cell inner membrane</keyword>
<keyword id="KW-1003">Cell membrane</keyword>
<keyword id="KW-0406">Ion transport</keyword>
<keyword id="KW-0472">Membrane</keyword>
<keyword id="KW-0547">Nucleotide-binding</keyword>
<keyword id="KW-1185">Reference proteome</keyword>
<keyword id="KW-1278">Translocase</keyword>
<keyword id="KW-0813">Transport</keyword>
<keyword id="KW-0862">Zinc</keyword>
<keyword id="KW-0864">Zinc transport</keyword>
<gene>
    <name evidence="1" type="primary">znuC</name>
    <name type="ordered locus">PBPRA1054</name>
</gene>
<protein>
    <recommendedName>
        <fullName evidence="1">Zinc import ATP-binding protein ZnuC</fullName>
        <ecNumber evidence="1">7.2.2.20</ecNumber>
    </recommendedName>
</protein>
<proteinExistence type="inferred from homology"/>
<dbReference type="EC" id="7.2.2.20" evidence="1"/>
<dbReference type="EMBL" id="CR378666">
    <property type="protein sequence ID" value="CAG19465.1"/>
    <property type="molecule type" value="Genomic_DNA"/>
</dbReference>
<dbReference type="RefSeq" id="WP_011217799.1">
    <property type="nucleotide sequence ID" value="NC_006370.1"/>
</dbReference>
<dbReference type="SMR" id="Q6LTB1"/>
<dbReference type="STRING" id="298386.PBPRA1054"/>
<dbReference type="KEGG" id="ppr:PBPRA1054"/>
<dbReference type="eggNOG" id="COG1121">
    <property type="taxonomic scope" value="Bacteria"/>
</dbReference>
<dbReference type="HOGENOM" id="CLU_000604_1_11_6"/>
<dbReference type="Proteomes" id="UP000000593">
    <property type="component" value="Chromosome 1"/>
</dbReference>
<dbReference type="GO" id="GO:0005886">
    <property type="term" value="C:plasma membrane"/>
    <property type="evidence" value="ECO:0007669"/>
    <property type="project" value="UniProtKB-SubCell"/>
</dbReference>
<dbReference type="GO" id="GO:0015633">
    <property type="term" value="F:ABC-type zinc transporter activity"/>
    <property type="evidence" value="ECO:0007669"/>
    <property type="project" value="UniProtKB-EC"/>
</dbReference>
<dbReference type="GO" id="GO:0005524">
    <property type="term" value="F:ATP binding"/>
    <property type="evidence" value="ECO:0007669"/>
    <property type="project" value="UniProtKB-KW"/>
</dbReference>
<dbReference type="GO" id="GO:0016887">
    <property type="term" value="F:ATP hydrolysis activity"/>
    <property type="evidence" value="ECO:0007669"/>
    <property type="project" value="InterPro"/>
</dbReference>
<dbReference type="GO" id="GO:0010043">
    <property type="term" value="P:response to zinc ion"/>
    <property type="evidence" value="ECO:0007669"/>
    <property type="project" value="TreeGrafter"/>
</dbReference>
<dbReference type="FunFam" id="3.40.50.300:FF:000392">
    <property type="entry name" value="Zinc import ATP-binding protein ZnuC"/>
    <property type="match status" value="1"/>
</dbReference>
<dbReference type="Gene3D" id="3.40.50.300">
    <property type="entry name" value="P-loop containing nucleotide triphosphate hydrolases"/>
    <property type="match status" value="1"/>
</dbReference>
<dbReference type="InterPro" id="IPR003593">
    <property type="entry name" value="AAA+_ATPase"/>
</dbReference>
<dbReference type="InterPro" id="IPR003439">
    <property type="entry name" value="ABC_transporter-like_ATP-bd"/>
</dbReference>
<dbReference type="InterPro" id="IPR017871">
    <property type="entry name" value="ABC_transporter-like_CS"/>
</dbReference>
<dbReference type="InterPro" id="IPR050153">
    <property type="entry name" value="Metal_Ion_Import_ABC"/>
</dbReference>
<dbReference type="InterPro" id="IPR027417">
    <property type="entry name" value="P-loop_NTPase"/>
</dbReference>
<dbReference type="NCBIfam" id="NF007090">
    <property type="entry name" value="PRK09544.1"/>
    <property type="match status" value="1"/>
</dbReference>
<dbReference type="PANTHER" id="PTHR42734">
    <property type="entry name" value="METAL TRANSPORT SYSTEM ATP-BINDING PROTEIN TM_0124-RELATED"/>
    <property type="match status" value="1"/>
</dbReference>
<dbReference type="PANTHER" id="PTHR42734:SF9">
    <property type="entry name" value="ZINC IMPORT ATP-BINDING PROTEIN ZNUC"/>
    <property type="match status" value="1"/>
</dbReference>
<dbReference type="Pfam" id="PF00005">
    <property type="entry name" value="ABC_tran"/>
    <property type="match status" value="1"/>
</dbReference>
<dbReference type="SMART" id="SM00382">
    <property type="entry name" value="AAA"/>
    <property type="match status" value="1"/>
</dbReference>
<dbReference type="SUPFAM" id="SSF52540">
    <property type="entry name" value="P-loop containing nucleoside triphosphate hydrolases"/>
    <property type="match status" value="1"/>
</dbReference>
<dbReference type="PROSITE" id="PS00211">
    <property type="entry name" value="ABC_TRANSPORTER_1"/>
    <property type="match status" value="1"/>
</dbReference>
<dbReference type="PROSITE" id="PS50893">
    <property type="entry name" value="ABC_TRANSPORTER_2"/>
    <property type="match status" value="1"/>
</dbReference>
<dbReference type="PROSITE" id="PS51298">
    <property type="entry name" value="ZNUC"/>
    <property type="match status" value="1"/>
</dbReference>
<organism>
    <name type="scientific">Photobacterium profundum (strain SS9)</name>
    <dbReference type="NCBI Taxonomy" id="298386"/>
    <lineage>
        <taxon>Bacteria</taxon>
        <taxon>Pseudomonadati</taxon>
        <taxon>Pseudomonadota</taxon>
        <taxon>Gammaproteobacteria</taxon>
        <taxon>Vibrionales</taxon>
        <taxon>Vibrionaceae</taxon>
        <taxon>Photobacterium</taxon>
    </lineage>
</organism>
<reference key="1">
    <citation type="journal article" date="2005" name="Science">
        <title>Life at depth: Photobacterium profundum genome sequence and expression analysis.</title>
        <authorList>
            <person name="Vezzi A."/>
            <person name="Campanaro S."/>
            <person name="D'Angelo M."/>
            <person name="Simonato F."/>
            <person name="Vitulo N."/>
            <person name="Lauro F.M."/>
            <person name="Cestaro A."/>
            <person name="Malacrida G."/>
            <person name="Simionati B."/>
            <person name="Cannata N."/>
            <person name="Romualdi C."/>
            <person name="Bartlett D.H."/>
            <person name="Valle G."/>
        </authorList>
    </citation>
    <scope>NUCLEOTIDE SEQUENCE [LARGE SCALE GENOMIC DNA]</scope>
    <source>
        <strain>ATCC BAA-1253 / SS9</strain>
    </source>
</reference>
<sequence>MTTLVELQSVTVTFGDRHVLDQVSMKLERGQITTLIGPNGAGKSTLVKVITGLRKPSTGHVVRQKGIRIGYVPQKLQLNSTLPLTVDRFMRLAGRYDENARKEALSLVGGTHLHHSDMHSLSGGEMQRVLLARALLQKPDVLVLDEPVQGVDVNGQLELYNLIQSLRDILNCSILMVSHDLHLVMAKTDNVICLHHHICCSGEPDTITNHPSYVALFGQQQSEQLALYHHHHNHEHDLAGSPVGPCQHNKQHGHDNA</sequence>
<accession>Q6LTB1</accession>